<gene>
    <name evidence="2" type="primary">stn1</name>
    <name type="synonym">obfc1</name>
</gene>
<evidence type="ECO:0000250" key="1"/>
<evidence type="ECO:0000250" key="2">
    <source>
        <dbReference type="UniProtKB" id="Q9H668"/>
    </source>
</evidence>
<evidence type="ECO:0000305" key="3"/>
<accession>C1C4M3</accession>
<keyword id="KW-0158">Chromosome</keyword>
<keyword id="KW-0238">DNA-binding</keyword>
<keyword id="KW-0539">Nucleus</keyword>
<keyword id="KW-0779">Telomere</keyword>
<organism>
    <name type="scientific">Aquarana catesbeiana</name>
    <name type="common">American bullfrog</name>
    <name type="synonym">Rana catesbeiana</name>
    <dbReference type="NCBI Taxonomy" id="8400"/>
    <lineage>
        <taxon>Eukaryota</taxon>
        <taxon>Metazoa</taxon>
        <taxon>Chordata</taxon>
        <taxon>Craniata</taxon>
        <taxon>Vertebrata</taxon>
        <taxon>Euteleostomi</taxon>
        <taxon>Amphibia</taxon>
        <taxon>Batrachia</taxon>
        <taxon>Anura</taxon>
        <taxon>Neobatrachia</taxon>
        <taxon>Ranoidea</taxon>
        <taxon>Ranidae</taxon>
        <taxon>Aquarana</taxon>
    </lineage>
</organism>
<comment type="function">
    <text evidence="2">Component of the CST complex proposed to act as a specialized replication factor promoting DNA replication under conditions of replication stress or natural replication barriers such as the telomere duplex. The CST complex binds single-stranded DNA with high affinity in a sequence-independent manner, while isolated subunits bind DNA with low affinity by themselves. Initially the CST complex has been proposed to protect telomeres from DNA degradation. However, the CST complex has been shown to be involved in several aspects of telomere replication.</text>
</comment>
<comment type="subunit">
    <text evidence="2">Component of the CST complex.</text>
</comment>
<comment type="subcellular location">
    <subcellularLocation>
        <location evidence="2">Nucleus</location>
    </subcellularLocation>
    <subcellularLocation>
        <location evidence="2">Chromosome</location>
        <location evidence="2">Telomere</location>
    </subcellularLocation>
</comment>
<comment type="similarity">
    <text evidence="3">Belongs to the CTC1 family.</text>
</comment>
<feature type="chain" id="PRO_0000392990" description="CST complex subunit STN1">
    <location>
        <begin position="1"/>
        <end position="336"/>
    </location>
</feature>
<feature type="DNA-binding region" description="OB">
    <location>
        <begin position="49"/>
        <end position="126"/>
    </location>
</feature>
<feature type="region of interest" description="Winged helix-turn-helix (wHTH) 1" evidence="1">
    <location>
        <begin position="162"/>
        <end position="263"/>
    </location>
</feature>
<feature type="region of interest" description="Winged helix-turn-helix (wHTH) 2" evidence="1">
    <location>
        <begin position="264"/>
        <end position="336"/>
    </location>
</feature>
<protein>
    <recommendedName>
        <fullName evidence="2">CST complex subunit STN1</fullName>
    </recommendedName>
    <alternativeName>
        <fullName>Oligonucleotide/oligosaccharide-binding fold-containing protein 1</fullName>
    </alternativeName>
    <alternativeName>
        <fullName>Suppressor of cdc thirteen homolog</fullName>
    </alternativeName>
</protein>
<proteinExistence type="evidence at transcript level"/>
<sequence>MKEPPSLLWGLDPVFLSHARLYIKDILELKESNQVPGIFFYKDHPIKQVDILGTVVCVREKDAFYSYGDVHRSTSGANDLDGLVQELHRQESSKAKMEIGDVIRVRGYIKVFRMQREVVASIFYKVDDPTLDMQIMRMLELPYLYKHAYDKPFILPEDMTNQSQEQPNQAVLQRSGLISLLSEKIMNFVKENTIYNFYLPELESMPSLLSEATNPHYITESDSNVSSSSREIRSLFKEAIHILLKRGIVYQKGQNKDVYYVTDHDKELHKLTLNMIKQDCSRQGHAEKGCHFLHILNCVQQDFGSCINEAILQRVINALEQNSDIVSTMEKYYTAF</sequence>
<reference key="1">
    <citation type="submission" date="2009-04" db="EMBL/GenBank/DDBJ databases">
        <title>Rana catesbeiana ESTs and full-length cDNAs.</title>
        <authorList>
            <person name="Helbing C.C."/>
            <person name="Veldhoen N."/>
            <person name="Leong J."/>
            <person name="Koop B.F."/>
        </authorList>
    </citation>
    <scope>NUCLEOTIDE SEQUENCE [LARGE SCALE MRNA]</scope>
</reference>
<dbReference type="EMBL" id="BT081802">
    <property type="protein sequence ID" value="ACO51933.1"/>
    <property type="molecule type" value="mRNA"/>
</dbReference>
<dbReference type="SMR" id="C1C4M3"/>
<dbReference type="GO" id="GO:0000781">
    <property type="term" value="C:chromosome, telomeric region"/>
    <property type="evidence" value="ECO:0000250"/>
    <property type="project" value="UniProtKB"/>
</dbReference>
<dbReference type="GO" id="GO:1990879">
    <property type="term" value="C:CST complex"/>
    <property type="evidence" value="ECO:0007669"/>
    <property type="project" value="InterPro"/>
</dbReference>
<dbReference type="GO" id="GO:0005634">
    <property type="term" value="C:nucleus"/>
    <property type="evidence" value="ECO:0000250"/>
    <property type="project" value="UniProtKB"/>
</dbReference>
<dbReference type="GO" id="GO:0043047">
    <property type="term" value="F:single-stranded telomeric DNA binding"/>
    <property type="evidence" value="ECO:0000250"/>
    <property type="project" value="UniProtKB"/>
</dbReference>
<dbReference type="GO" id="GO:0016233">
    <property type="term" value="P:telomere capping"/>
    <property type="evidence" value="ECO:0007669"/>
    <property type="project" value="InterPro"/>
</dbReference>
<dbReference type="GO" id="GO:0000723">
    <property type="term" value="P:telomere maintenance"/>
    <property type="evidence" value="ECO:0000250"/>
    <property type="project" value="UniProtKB"/>
</dbReference>
<dbReference type="GO" id="GO:0010833">
    <property type="term" value="P:telomere maintenance via telomere lengthening"/>
    <property type="evidence" value="ECO:0000250"/>
    <property type="project" value="UniProtKB"/>
</dbReference>
<dbReference type="FunFam" id="2.40.50.140:FF:000920">
    <property type="match status" value="1"/>
</dbReference>
<dbReference type="FunFam" id="1.10.10.10:FF:000275">
    <property type="entry name" value="CST complex subunit STN1"/>
    <property type="match status" value="1"/>
</dbReference>
<dbReference type="Gene3D" id="1.10.10.980">
    <property type="entry name" value="CST, Suppressor of Cdc13 homolog, complex subunit STN1, N-terminal domain"/>
    <property type="match status" value="1"/>
</dbReference>
<dbReference type="Gene3D" id="2.40.50.140">
    <property type="entry name" value="Nucleic acid-binding proteins"/>
    <property type="match status" value="2"/>
</dbReference>
<dbReference type="Gene3D" id="1.10.10.10">
    <property type="entry name" value="Winged helix-like DNA-binding domain superfamily/Winged helix DNA-binding domain"/>
    <property type="match status" value="1"/>
</dbReference>
<dbReference type="InterPro" id="IPR015253">
    <property type="entry name" value="CST_STN1_C"/>
</dbReference>
<dbReference type="InterPro" id="IPR042082">
    <property type="entry name" value="CST_Stn1_wHTH1_sf"/>
</dbReference>
<dbReference type="InterPro" id="IPR012340">
    <property type="entry name" value="NA-bd_OB-fold"/>
</dbReference>
<dbReference type="InterPro" id="IPR040260">
    <property type="entry name" value="RFA2-like"/>
</dbReference>
<dbReference type="InterPro" id="IPR014647">
    <property type="entry name" value="Stn1"/>
</dbReference>
<dbReference type="InterPro" id="IPR036388">
    <property type="entry name" value="WH-like_DNA-bd_sf"/>
</dbReference>
<dbReference type="InterPro" id="IPR036390">
    <property type="entry name" value="WH_DNA-bd_sf"/>
</dbReference>
<dbReference type="PANTHER" id="PTHR13989:SF33">
    <property type="entry name" value="CST COMPLEX SUBUNIT STN1"/>
    <property type="match status" value="1"/>
</dbReference>
<dbReference type="PANTHER" id="PTHR13989">
    <property type="entry name" value="REPLICATION PROTEIN A-RELATED"/>
    <property type="match status" value="1"/>
</dbReference>
<dbReference type="Pfam" id="PF09170">
    <property type="entry name" value="STN1_2"/>
    <property type="match status" value="1"/>
</dbReference>
<dbReference type="PIRSF" id="PIRSF036950">
    <property type="entry name" value="UCP036950"/>
    <property type="match status" value="1"/>
</dbReference>
<dbReference type="SUPFAM" id="SSF50249">
    <property type="entry name" value="Nucleic acid-binding proteins"/>
    <property type="match status" value="1"/>
</dbReference>
<dbReference type="SUPFAM" id="SSF46785">
    <property type="entry name" value="Winged helix' DNA-binding domain"/>
    <property type="match status" value="1"/>
</dbReference>
<name>STN1_AQUCT</name>